<dbReference type="EC" id="3.4.11.18" evidence="1"/>
<dbReference type="EMBL" id="DS027050">
    <property type="protein sequence ID" value="EAW12299.1"/>
    <property type="molecule type" value="Genomic_DNA"/>
</dbReference>
<dbReference type="RefSeq" id="XP_001273725.1">
    <property type="nucleotide sequence ID" value="XM_001273724.1"/>
</dbReference>
<dbReference type="SMR" id="A1CCP2"/>
<dbReference type="STRING" id="344612.A1CCP2"/>
<dbReference type="MEROPS" id="M24.002"/>
<dbReference type="EnsemblFungi" id="EAW12299">
    <property type="protein sequence ID" value="EAW12299"/>
    <property type="gene ID" value="ACLA_062640"/>
</dbReference>
<dbReference type="GeneID" id="4706022"/>
<dbReference type="KEGG" id="act:ACLA_062640"/>
<dbReference type="VEuPathDB" id="FungiDB:ACLA_062640"/>
<dbReference type="eggNOG" id="KOG2775">
    <property type="taxonomic scope" value="Eukaryota"/>
</dbReference>
<dbReference type="HOGENOM" id="CLU_015857_7_1_1"/>
<dbReference type="OMA" id="ILRYHIH"/>
<dbReference type="OrthoDB" id="7848262at2759"/>
<dbReference type="Proteomes" id="UP000006701">
    <property type="component" value="Unassembled WGS sequence"/>
</dbReference>
<dbReference type="GO" id="GO:0005737">
    <property type="term" value="C:cytoplasm"/>
    <property type="evidence" value="ECO:0007669"/>
    <property type="project" value="UniProtKB-SubCell"/>
</dbReference>
<dbReference type="GO" id="GO:0004239">
    <property type="term" value="F:initiator methionyl aminopeptidase activity"/>
    <property type="evidence" value="ECO:0007669"/>
    <property type="project" value="UniProtKB-UniRule"/>
</dbReference>
<dbReference type="GO" id="GO:0046872">
    <property type="term" value="F:metal ion binding"/>
    <property type="evidence" value="ECO:0007669"/>
    <property type="project" value="UniProtKB-UniRule"/>
</dbReference>
<dbReference type="GO" id="GO:0070006">
    <property type="term" value="F:metalloaminopeptidase activity"/>
    <property type="evidence" value="ECO:0007669"/>
    <property type="project" value="UniProtKB-UniRule"/>
</dbReference>
<dbReference type="GO" id="GO:0006508">
    <property type="term" value="P:proteolysis"/>
    <property type="evidence" value="ECO:0007669"/>
    <property type="project" value="UniProtKB-KW"/>
</dbReference>
<dbReference type="CDD" id="cd01088">
    <property type="entry name" value="MetAP2"/>
    <property type="match status" value="1"/>
</dbReference>
<dbReference type="Gene3D" id="3.90.230.10">
    <property type="entry name" value="Creatinase/methionine aminopeptidase superfamily"/>
    <property type="match status" value="1"/>
</dbReference>
<dbReference type="Gene3D" id="1.10.10.10">
    <property type="entry name" value="Winged helix-like DNA-binding domain superfamily/Winged helix DNA-binding domain"/>
    <property type="match status" value="1"/>
</dbReference>
<dbReference type="HAMAP" id="MF_03175">
    <property type="entry name" value="MetAP_2_euk"/>
    <property type="match status" value="1"/>
</dbReference>
<dbReference type="InterPro" id="IPR036005">
    <property type="entry name" value="Creatinase/aminopeptidase-like"/>
</dbReference>
<dbReference type="InterPro" id="IPR050247">
    <property type="entry name" value="Met_Aminopeptidase_Type2"/>
</dbReference>
<dbReference type="InterPro" id="IPR000994">
    <property type="entry name" value="Pept_M24"/>
</dbReference>
<dbReference type="InterPro" id="IPR001714">
    <property type="entry name" value="Pept_M24_MAP"/>
</dbReference>
<dbReference type="InterPro" id="IPR002468">
    <property type="entry name" value="Pept_M24A_MAP2"/>
</dbReference>
<dbReference type="InterPro" id="IPR018349">
    <property type="entry name" value="Pept_M24A_MAP2_BS"/>
</dbReference>
<dbReference type="InterPro" id="IPR036388">
    <property type="entry name" value="WH-like_DNA-bd_sf"/>
</dbReference>
<dbReference type="InterPro" id="IPR036390">
    <property type="entry name" value="WH_DNA-bd_sf"/>
</dbReference>
<dbReference type="NCBIfam" id="TIGR00501">
    <property type="entry name" value="met_pdase_II"/>
    <property type="match status" value="1"/>
</dbReference>
<dbReference type="PANTHER" id="PTHR45777">
    <property type="entry name" value="METHIONINE AMINOPEPTIDASE 2"/>
    <property type="match status" value="1"/>
</dbReference>
<dbReference type="PANTHER" id="PTHR45777:SF1">
    <property type="entry name" value="METHIONINE AMINOPEPTIDASE 2-2"/>
    <property type="match status" value="1"/>
</dbReference>
<dbReference type="Pfam" id="PF00557">
    <property type="entry name" value="Peptidase_M24"/>
    <property type="match status" value="1"/>
</dbReference>
<dbReference type="PRINTS" id="PR00599">
    <property type="entry name" value="MAPEPTIDASE"/>
</dbReference>
<dbReference type="SUPFAM" id="SSF55920">
    <property type="entry name" value="Creatinase/aminopeptidase"/>
    <property type="match status" value="1"/>
</dbReference>
<dbReference type="SUPFAM" id="SSF46785">
    <property type="entry name" value="Winged helix' DNA-binding domain"/>
    <property type="match status" value="1"/>
</dbReference>
<dbReference type="PROSITE" id="PS01202">
    <property type="entry name" value="MAP_2"/>
    <property type="match status" value="1"/>
</dbReference>
<keyword id="KW-0031">Aminopeptidase</keyword>
<keyword id="KW-0963">Cytoplasm</keyword>
<keyword id="KW-0378">Hydrolase</keyword>
<keyword id="KW-0479">Metal-binding</keyword>
<keyword id="KW-0645">Protease</keyword>
<keyword id="KW-1185">Reference proteome</keyword>
<feature type="chain" id="PRO_0000407620" description="Methionine aminopeptidase 2-1">
    <location>
        <begin position="1"/>
        <end position="478"/>
    </location>
</feature>
<feature type="region of interest" description="Disordered" evidence="2">
    <location>
        <begin position="1"/>
        <end position="124"/>
    </location>
</feature>
<feature type="compositionally biased region" description="Acidic residues" evidence="2">
    <location>
        <begin position="46"/>
        <end position="56"/>
    </location>
</feature>
<feature type="compositionally biased region" description="Basic residues" evidence="2">
    <location>
        <begin position="92"/>
        <end position="104"/>
    </location>
</feature>
<feature type="binding site" evidence="1">
    <location>
        <position position="230"/>
    </location>
    <ligand>
        <name>substrate</name>
    </ligand>
</feature>
<feature type="binding site" evidence="1">
    <location>
        <position position="251"/>
    </location>
    <ligand>
        <name>a divalent metal cation</name>
        <dbReference type="ChEBI" id="CHEBI:60240"/>
        <label>1</label>
    </ligand>
</feature>
<feature type="binding site" evidence="1">
    <location>
        <position position="262"/>
    </location>
    <ligand>
        <name>a divalent metal cation</name>
        <dbReference type="ChEBI" id="CHEBI:60240"/>
        <label>1</label>
    </ligand>
</feature>
<feature type="binding site" evidence="1">
    <location>
        <position position="262"/>
    </location>
    <ligand>
        <name>a divalent metal cation</name>
        <dbReference type="ChEBI" id="CHEBI:60240"/>
        <label>2</label>
        <note>catalytic</note>
    </ligand>
</feature>
<feature type="binding site" evidence="1">
    <location>
        <position position="331"/>
    </location>
    <ligand>
        <name>a divalent metal cation</name>
        <dbReference type="ChEBI" id="CHEBI:60240"/>
        <label>2</label>
        <note>catalytic</note>
    </ligand>
</feature>
<feature type="binding site" evidence="1">
    <location>
        <position position="339"/>
    </location>
    <ligand>
        <name>substrate</name>
    </ligand>
</feature>
<feature type="binding site" evidence="1">
    <location>
        <position position="364"/>
    </location>
    <ligand>
        <name>a divalent metal cation</name>
        <dbReference type="ChEBI" id="CHEBI:60240"/>
        <label>2</label>
        <note>catalytic</note>
    </ligand>
</feature>
<feature type="binding site" evidence="1">
    <location>
        <position position="459"/>
    </location>
    <ligand>
        <name>a divalent metal cation</name>
        <dbReference type="ChEBI" id="CHEBI:60240"/>
        <label>1</label>
    </ligand>
</feature>
<feature type="binding site" evidence="1">
    <location>
        <position position="459"/>
    </location>
    <ligand>
        <name>a divalent metal cation</name>
        <dbReference type="ChEBI" id="CHEBI:60240"/>
        <label>2</label>
        <note>catalytic</note>
    </ligand>
</feature>
<evidence type="ECO:0000255" key="1">
    <source>
        <dbReference type="HAMAP-Rule" id="MF_03175"/>
    </source>
</evidence>
<evidence type="ECO:0000256" key="2">
    <source>
        <dbReference type="SAM" id="MobiDB-lite"/>
    </source>
</evidence>
<accession>A1CCP2</accession>
<organism>
    <name type="scientific">Aspergillus clavatus (strain ATCC 1007 / CBS 513.65 / DSM 816 / NCTC 3887 / NRRL 1 / QM 1276 / 107)</name>
    <dbReference type="NCBI Taxonomy" id="344612"/>
    <lineage>
        <taxon>Eukaryota</taxon>
        <taxon>Fungi</taxon>
        <taxon>Dikarya</taxon>
        <taxon>Ascomycota</taxon>
        <taxon>Pezizomycotina</taxon>
        <taxon>Eurotiomycetes</taxon>
        <taxon>Eurotiomycetidae</taxon>
        <taxon>Eurotiales</taxon>
        <taxon>Aspergillaceae</taxon>
        <taxon>Aspergillus</taxon>
        <taxon>Aspergillus subgen. Fumigati</taxon>
    </lineage>
</organism>
<comment type="function">
    <text evidence="1">Cotranslationally removes the N-terminal methionine from nascent proteins. The N-terminal methionine is often cleaved when the second residue in the primary sequence is small and uncharged (Met-Ala-, Cys, Gly, Pro, Ser, Thr, or Val).</text>
</comment>
<comment type="catalytic activity">
    <reaction evidence="1">
        <text>Release of N-terminal amino acids, preferentially methionine, from peptides and arylamides.</text>
        <dbReference type="EC" id="3.4.11.18"/>
    </reaction>
</comment>
<comment type="cofactor">
    <cofactor evidence="1">
        <name>Co(2+)</name>
        <dbReference type="ChEBI" id="CHEBI:48828"/>
    </cofactor>
    <cofactor evidence="1">
        <name>Zn(2+)</name>
        <dbReference type="ChEBI" id="CHEBI:29105"/>
    </cofactor>
    <cofactor evidence="1">
        <name>Mn(2+)</name>
        <dbReference type="ChEBI" id="CHEBI:29035"/>
    </cofactor>
    <cofactor evidence="1">
        <name>Fe(2+)</name>
        <dbReference type="ChEBI" id="CHEBI:29033"/>
    </cofactor>
    <text evidence="1">Binds 2 divalent metal cations per subunit. Has a high-affinity and a low affinity metal-binding site. The true nature of the physiological cofactor is under debate. The enzyme is active with cobalt, zinc, manganese or divalent iron ions. Most likely, methionine aminopeptidases function as mononuclear Fe(2+)-metalloproteases under physiological conditions, and the catalytically relevant metal-binding site has been assigned to the histidine-containing high-affinity site.</text>
</comment>
<comment type="subcellular location">
    <subcellularLocation>
        <location evidence="1">Cytoplasm</location>
    </subcellularLocation>
</comment>
<comment type="similarity">
    <text evidence="1">Belongs to the peptidase M24A family. Methionine aminopeptidase eukaryotic type 2 subfamily.</text>
</comment>
<proteinExistence type="inferred from homology"/>
<gene>
    <name type="ORF">ACLA_062640</name>
</gene>
<protein>
    <recommendedName>
        <fullName evidence="1">Methionine aminopeptidase 2-1</fullName>
        <shortName evidence="1">MAP 2-1</shortName>
        <shortName evidence="1">MetAP 2-1</shortName>
        <ecNumber evidence="1">3.4.11.18</ecNumber>
    </recommendedName>
    <alternativeName>
        <fullName evidence="1">Peptidase M</fullName>
    </alternativeName>
</protein>
<name>MAP21_ASPCL</name>
<reference key="1">
    <citation type="journal article" date="2008" name="PLoS Genet.">
        <title>Genomic islands in the pathogenic filamentous fungus Aspergillus fumigatus.</title>
        <authorList>
            <person name="Fedorova N.D."/>
            <person name="Khaldi N."/>
            <person name="Joardar V.S."/>
            <person name="Maiti R."/>
            <person name="Amedeo P."/>
            <person name="Anderson M.J."/>
            <person name="Crabtree J."/>
            <person name="Silva J.C."/>
            <person name="Badger J.H."/>
            <person name="Albarraq A."/>
            <person name="Angiuoli S."/>
            <person name="Bussey H."/>
            <person name="Bowyer P."/>
            <person name="Cotty P.J."/>
            <person name="Dyer P.S."/>
            <person name="Egan A."/>
            <person name="Galens K."/>
            <person name="Fraser-Liggett C.M."/>
            <person name="Haas B.J."/>
            <person name="Inman J.M."/>
            <person name="Kent R."/>
            <person name="Lemieux S."/>
            <person name="Malavazi I."/>
            <person name="Orvis J."/>
            <person name="Roemer T."/>
            <person name="Ronning C.M."/>
            <person name="Sundaram J.P."/>
            <person name="Sutton G."/>
            <person name="Turner G."/>
            <person name="Venter J.C."/>
            <person name="White O.R."/>
            <person name="Whitty B.R."/>
            <person name="Youngman P."/>
            <person name="Wolfe K.H."/>
            <person name="Goldman G.H."/>
            <person name="Wortman J.R."/>
            <person name="Jiang B."/>
            <person name="Denning D.W."/>
            <person name="Nierman W.C."/>
        </authorList>
    </citation>
    <scope>NUCLEOTIDE SEQUENCE [LARGE SCALE GENOMIC DNA]</scope>
    <source>
        <strain>ATCC 1007 / CBS 513.65 / DSM 816 / NCTC 3887 / NRRL 1 / QM 1276 / 107</strain>
    </source>
</reference>
<sequence length="478" mass="52088">MGSKSPEGHNQAPHGAPNALDKPANPAVKAQNGSGSADLDRGTISNDDDDADDDEKETQINGSSNAGRIYLFPSRPAKFQHRPTDTPSTPEKKKKKRKRSKKKAKPTEAKQTSPPRVPLSTLFPSGYPVGELVADDRTSRVTDEETRYNSRLWDDGFLADYRQAAEIHRQVRQYAQRELIKPGATLSSIADGIEDGVRALSGHQGLETGDGLNAGMGFPTGLCVNHVAAHWTPNPGAKEVVLEKSDVLKVDFGVHVNGRIVDSAFTVAFDPVYDNLLEAVKEATNTGIAHAGIDARVSDIGAAIQEVMESYELEIAGKSVPVKAIRNITGHNILRYHIHGGKQVPFIKNNRRDKMEEGEVFAIETFGSTGKGYLDDDFGIYGYGRNEHVPATGLRLASARSLVKTIDANFGSLVFSRRYLERLGVKSYHLAMKNLIDNGIVESYAPLVDVKGSYTAQFEHTILLHSGGKEVISRGDDY</sequence>